<protein>
    <recommendedName>
        <fullName>NADH-ubiquinone oxidoreductase chain 4</fullName>
        <ecNumber evidence="1">7.1.1.2</ecNumber>
    </recommendedName>
    <alternativeName>
        <fullName>NADH dehydrogenase subunit 4</fullName>
    </alternativeName>
</protein>
<geneLocation type="mitochondrion"/>
<feature type="chain" id="PRO_0000117980" description="NADH-ubiquinone oxidoreductase chain 4">
    <location>
        <begin position="1"/>
        <end position="459"/>
    </location>
</feature>
<feature type="transmembrane region" description="Helical" evidence="3">
    <location>
        <begin position="22"/>
        <end position="42"/>
    </location>
</feature>
<feature type="transmembrane region" description="Helical" evidence="3">
    <location>
        <begin position="60"/>
        <end position="80"/>
    </location>
</feature>
<feature type="transmembrane region" description="Helical" evidence="3">
    <location>
        <begin position="92"/>
        <end position="112"/>
    </location>
</feature>
<feature type="transmembrane region" description="Helical" evidence="3">
    <location>
        <begin position="113"/>
        <end position="133"/>
    </location>
</feature>
<feature type="transmembrane region" description="Helical" evidence="3">
    <location>
        <begin position="147"/>
        <end position="167"/>
    </location>
</feature>
<feature type="transmembrane region" description="Helical" evidence="3">
    <location>
        <begin position="196"/>
        <end position="216"/>
    </location>
</feature>
<feature type="transmembrane region" description="Helical" evidence="3">
    <location>
        <begin position="224"/>
        <end position="244"/>
    </location>
</feature>
<feature type="transmembrane region" description="Helical" evidence="3">
    <location>
        <begin position="257"/>
        <end position="277"/>
    </location>
</feature>
<feature type="transmembrane region" description="Helical" evidence="3">
    <location>
        <begin position="284"/>
        <end position="303"/>
    </location>
</feature>
<feature type="transmembrane region" description="Helical" evidence="3">
    <location>
        <begin position="308"/>
        <end position="330"/>
    </location>
</feature>
<feature type="transmembrane region" description="Helical" evidence="3">
    <location>
        <begin position="351"/>
        <end position="371"/>
    </location>
</feature>
<feature type="transmembrane region" description="Helical" evidence="3">
    <location>
        <begin position="375"/>
        <end position="395"/>
    </location>
</feature>
<feature type="transmembrane region" description="Helical" evidence="3">
    <location>
        <begin position="439"/>
        <end position="459"/>
    </location>
</feature>
<keyword id="KW-0249">Electron transport</keyword>
<keyword id="KW-0472">Membrane</keyword>
<keyword id="KW-0496">Mitochondrion</keyword>
<keyword id="KW-0999">Mitochondrion inner membrane</keyword>
<keyword id="KW-0520">NAD</keyword>
<keyword id="KW-1185">Reference proteome</keyword>
<keyword id="KW-0679">Respiratory chain</keyword>
<keyword id="KW-1278">Translocase</keyword>
<keyword id="KW-0812">Transmembrane</keyword>
<keyword id="KW-1133">Transmembrane helix</keyword>
<keyword id="KW-0813">Transport</keyword>
<keyword id="KW-0830">Ubiquinone</keyword>
<gene>
    <name type="primary">MT-ND4</name>
    <name type="synonym">MTND4</name>
    <name type="synonym">NADH4</name>
    <name type="synonym">ND4</name>
</gene>
<sequence length="459" mass="51599">MLKTIIPTIMLIPTVWWSKPHMIWINATVYSLLISLTTLSLLNQPSDTNLNFSTTFFSDALSTPLLMLTTWLLPLMILASQHHLDKETLTRKKIYISLLISLQVFLVMTFSATEFILFYILFEATLIPTLIIITRWGNQTERLNAGTYFLFYTLMGSLPLLVALIYLQNSMGSLNFLLLQLMNKSITTSWSNSLMWLACMMAFLVKMPLYGLHLWLPKAHVEAPIAGSMVLAAILLKLGGYGMMRITILLSPITDYMAYPFLMLSLWGMIMTSSICLRQTDLKSLIAYSSVSHMALVIVAILIQTPWSFMGATALMIAHGLTSSLLFCLANSNYERIHSRTMLLARGLQTILPLMAAWWLVASLTNLALPPTINLLGELLIIMASFSWSNLTIILMGTNVLITALYSLYMLSTTQRGKFTYHTNNISPTFTRENTLMVLHLAPLLLLSISPKIILGLMF</sequence>
<accession>O79436</accession>
<proteinExistence type="inferred from homology"/>
<dbReference type="EC" id="7.1.1.2" evidence="1"/>
<dbReference type="EMBL" id="AJ001588">
    <property type="protein sequence ID" value="CAA04856.1"/>
    <property type="molecule type" value="Genomic_DNA"/>
</dbReference>
<dbReference type="PIR" id="T11489">
    <property type="entry name" value="T11489"/>
</dbReference>
<dbReference type="RefSeq" id="NP_007558.1">
    <property type="nucleotide sequence ID" value="NC_001913.1"/>
</dbReference>
<dbReference type="SMR" id="O79436"/>
<dbReference type="FunCoup" id="O79436">
    <property type="interactions" value="75"/>
</dbReference>
<dbReference type="STRING" id="9986.ENSOCUP00000026188"/>
<dbReference type="PaxDb" id="9986-ENSOCUP00000026188"/>
<dbReference type="Ensembl" id="ENSOCUT00000033133.1">
    <property type="protein sequence ID" value="ENSOCUP00000026188.1"/>
    <property type="gene ID" value="ENSOCUG00000029108.1"/>
</dbReference>
<dbReference type="GeneID" id="808225"/>
<dbReference type="KEGG" id="ocu:808225"/>
<dbReference type="CTD" id="4538"/>
<dbReference type="eggNOG" id="KOG4845">
    <property type="taxonomic scope" value="Eukaryota"/>
</dbReference>
<dbReference type="GeneTree" id="ENSGT00730000111316"/>
<dbReference type="HOGENOM" id="CLU_007100_4_0_1"/>
<dbReference type="InParanoid" id="O79436"/>
<dbReference type="OMA" id="ITRWGNQ"/>
<dbReference type="OrthoDB" id="564260at2759"/>
<dbReference type="TreeFam" id="TF343520"/>
<dbReference type="Proteomes" id="UP000001811">
    <property type="component" value="Mitochondrion"/>
</dbReference>
<dbReference type="Bgee" id="ENSOCUG00000029108">
    <property type="expression patterns" value="Expressed in prefrontal cortex and 15 other cell types or tissues"/>
</dbReference>
<dbReference type="ExpressionAtlas" id="O79436">
    <property type="expression patterns" value="baseline"/>
</dbReference>
<dbReference type="GO" id="GO:0005743">
    <property type="term" value="C:mitochondrial inner membrane"/>
    <property type="evidence" value="ECO:0000250"/>
    <property type="project" value="UniProtKB"/>
</dbReference>
<dbReference type="GO" id="GO:0045271">
    <property type="term" value="C:respiratory chain complex I"/>
    <property type="evidence" value="ECO:0007669"/>
    <property type="project" value="Ensembl"/>
</dbReference>
<dbReference type="GO" id="GO:0008137">
    <property type="term" value="F:NADH dehydrogenase (ubiquinone) activity"/>
    <property type="evidence" value="ECO:0000250"/>
    <property type="project" value="UniProtKB"/>
</dbReference>
<dbReference type="GO" id="GO:0048039">
    <property type="term" value="F:ubiquinone binding"/>
    <property type="evidence" value="ECO:0007669"/>
    <property type="project" value="TreeGrafter"/>
</dbReference>
<dbReference type="GO" id="GO:0015990">
    <property type="term" value="P:electron transport coupled proton transport"/>
    <property type="evidence" value="ECO:0007669"/>
    <property type="project" value="TreeGrafter"/>
</dbReference>
<dbReference type="GO" id="GO:0006120">
    <property type="term" value="P:mitochondrial electron transport, NADH to ubiquinone"/>
    <property type="evidence" value="ECO:0000250"/>
    <property type="project" value="UniProtKB"/>
</dbReference>
<dbReference type="GO" id="GO:0032981">
    <property type="term" value="P:mitochondrial respiratory chain complex I assembly"/>
    <property type="evidence" value="ECO:0000250"/>
    <property type="project" value="UniProtKB"/>
</dbReference>
<dbReference type="InterPro" id="IPR000260">
    <property type="entry name" value="NADH4_N"/>
</dbReference>
<dbReference type="InterPro" id="IPR010227">
    <property type="entry name" value="NADH_Q_OxRdtase_chainM/4"/>
</dbReference>
<dbReference type="InterPro" id="IPR003918">
    <property type="entry name" value="NADH_UbQ_OxRdtase"/>
</dbReference>
<dbReference type="InterPro" id="IPR001750">
    <property type="entry name" value="ND/Mrp_TM"/>
</dbReference>
<dbReference type="NCBIfam" id="TIGR01972">
    <property type="entry name" value="NDH_I_M"/>
    <property type="match status" value="1"/>
</dbReference>
<dbReference type="PANTHER" id="PTHR43507">
    <property type="entry name" value="NADH-UBIQUINONE OXIDOREDUCTASE CHAIN 4"/>
    <property type="match status" value="1"/>
</dbReference>
<dbReference type="PANTHER" id="PTHR43507:SF20">
    <property type="entry name" value="NADH-UBIQUINONE OXIDOREDUCTASE CHAIN 4"/>
    <property type="match status" value="1"/>
</dbReference>
<dbReference type="Pfam" id="PF01059">
    <property type="entry name" value="Oxidored_q5_N"/>
    <property type="match status" value="1"/>
</dbReference>
<dbReference type="Pfam" id="PF00361">
    <property type="entry name" value="Proton_antipo_M"/>
    <property type="match status" value="1"/>
</dbReference>
<dbReference type="PRINTS" id="PR01437">
    <property type="entry name" value="NUOXDRDTASE4"/>
</dbReference>
<comment type="function">
    <text evidence="1">Core subunit of the mitochondrial membrane respiratory chain NADH dehydrogenase (Complex I) which catalyzes electron transfer from NADH through the respiratory chain, using ubiquinone as an electron acceptor. Essential for the catalytic activity and assembly of complex I.</text>
</comment>
<comment type="catalytic activity">
    <reaction evidence="1">
        <text>a ubiquinone + NADH + 5 H(+)(in) = a ubiquinol + NAD(+) + 4 H(+)(out)</text>
        <dbReference type="Rhea" id="RHEA:29091"/>
        <dbReference type="Rhea" id="RHEA-COMP:9565"/>
        <dbReference type="Rhea" id="RHEA-COMP:9566"/>
        <dbReference type="ChEBI" id="CHEBI:15378"/>
        <dbReference type="ChEBI" id="CHEBI:16389"/>
        <dbReference type="ChEBI" id="CHEBI:17976"/>
        <dbReference type="ChEBI" id="CHEBI:57540"/>
        <dbReference type="ChEBI" id="CHEBI:57945"/>
        <dbReference type="EC" id="7.1.1.2"/>
    </reaction>
</comment>
<comment type="subunit">
    <text evidence="2">Core subunit of respiratory chain NADH dehydrogenase (Complex I) which is composed of 45 different subunits.</text>
</comment>
<comment type="subcellular location">
    <subcellularLocation>
        <location evidence="2">Mitochondrion inner membrane</location>
        <topology evidence="3">Multi-pass membrane protein</topology>
    </subcellularLocation>
</comment>
<comment type="similarity">
    <text evidence="4">Belongs to the complex I subunit 4 family.</text>
</comment>
<organism>
    <name type="scientific">Oryctolagus cuniculus</name>
    <name type="common">Rabbit</name>
    <dbReference type="NCBI Taxonomy" id="9986"/>
    <lineage>
        <taxon>Eukaryota</taxon>
        <taxon>Metazoa</taxon>
        <taxon>Chordata</taxon>
        <taxon>Craniata</taxon>
        <taxon>Vertebrata</taxon>
        <taxon>Euteleostomi</taxon>
        <taxon>Mammalia</taxon>
        <taxon>Eutheria</taxon>
        <taxon>Euarchontoglires</taxon>
        <taxon>Glires</taxon>
        <taxon>Lagomorpha</taxon>
        <taxon>Leporidae</taxon>
        <taxon>Oryctolagus</taxon>
    </lineage>
</organism>
<reference key="1">
    <citation type="journal article" date="1998" name="Genomics">
        <title>The complete mitochondrial DNA sequence of the rabbit, Oryctolagus cuniculus.</title>
        <authorList>
            <person name="Gissi C."/>
            <person name="Gullberg A."/>
            <person name="Arnason U."/>
        </authorList>
    </citation>
    <scope>NUCLEOTIDE SEQUENCE [LARGE SCALE GENOMIC DNA]</scope>
    <source>
        <strain evidence="5">Thorbecke</strain>
    </source>
</reference>
<evidence type="ECO:0000250" key="1">
    <source>
        <dbReference type="UniProtKB" id="P03905"/>
    </source>
</evidence>
<evidence type="ECO:0000250" key="2">
    <source>
        <dbReference type="UniProtKB" id="P03910"/>
    </source>
</evidence>
<evidence type="ECO:0000255" key="3"/>
<evidence type="ECO:0000305" key="4"/>
<evidence type="ECO:0000312" key="5">
    <source>
        <dbReference type="Proteomes" id="UP000001811"/>
    </source>
</evidence>
<name>NU4M_RABIT</name>